<keyword id="KW-0028">Amino-acid biosynthesis</keyword>
<keyword id="KW-0057">Aromatic amino acid biosynthesis</keyword>
<keyword id="KW-0521">NADP</keyword>
<keyword id="KW-0560">Oxidoreductase</keyword>
<keyword id="KW-1185">Reference proteome</keyword>
<evidence type="ECO:0000255" key="1">
    <source>
        <dbReference type="HAMAP-Rule" id="MF_00222"/>
    </source>
</evidence>
<accession>B2VK88</accession>
<name>AROE_ERWT9</name>
<gene>
    <name evidence="1" type="primary">aroE</name>
    <name type="ordered locus">ETA_31230</name>
</gene>
<comment type="function">
    <text evidence="1">Involved in the biosynthesis of the chorismate, which leads to the biosynthesis of aromatic amino acids. Catalyzes the reversible NADPH linked reduction of 3-dehydroshikimate (DHSA) to yield shikimate (SA).</text>
</comment>
<comment type="catalytic activity">
    <reaction evidence="1">
        <text>shikimate + NADP(+) = 3-dehydroshikimate + NADPH + H(+)</text>
        <dbReference type="Rhea" id="RHEA:17737"/>
        <dbReference type="ChEBI" id="CHEBI:15378"/>
        <dbReference type="ChEBI" id="CHEBI:16630"/>
        <dbReference type="ChEBI" id="CHEBI:36208"/>
        <dbReference type="ChEBI" id="CHEBI:57783"/>
        <dbReference type="ChEBI" id="CHEBI:58349"/>
        <dbReference type="EC" id="1.1.1.25"/>
    </reaction>
</comment>
<comment type="pathway">
    <text evidence="1">Metabolic intermediate biosynthesis; chorismate biosynthesis; chorismate from D-erythrose 4-phosphate and phosphoenolpyruvate: step 4/7.</text>
</comment>
<comment type="subunit">
    <text evidence="1">Homodimer.</text>
</comment>
<comment type="similarity">
    <text evidence="1">Belongs to the shikimate dehydrogenase family.</text>
</comment>
<organism>
    <name type="scientific">Erwinia tasmaniensis (strain DSM 17950 / CFBP 7177 / CIP 109463 / NCPPB 4357 / Et1/99)</name>
    <dbReference type="NCBI Taxonomy" id="465817"/>
    <lineage>
        <taxon>Bacteria</taxon>
        <taxon>Pseudomonadati</taxon>
        <taxon>Pseudomonadota</taxon>
        <taxon>Gammaproteobacteria</taxon>
        <taxon>Enterobacterales</taxon>
        <taxon>Erwiniaceae</taxon>
        <taxon>Erwinia</taxon>
    </lineage>
</organism>
<reference key="1">
    <citation type="journal article" date="2008" name="Environ. Microbiol.">
        <title>The genome of Erwinia tasmaniensis strain Et1/99, a non-pathogenic bacterium in the genus Erwinia.</title>
        <authorList>
            <person name="Kube M."/>
            <person name="Migdoll A.M."/>
            <person name="Mueller I."/>
            <person name="Kuhl H."/>
            <person name="Beck A."/>
            <person name="Reinhardt R."/>
            <person name="Geider K."/>
        </authorList>
    </citation>
    <scope>NUCLEOTIDE SEQUENCE [LARGE SCALE GENOMIC DNA]</scope>
    <source>
        <strain>DSM 17950 / CFBP 7177 / CIP 109463 / NCPPB 4357 / Et1/99</strain>
    </source>
</reference>
<feature type="chain" id="PRO_1000100118" description="Shikimate dehydrogenase (NADP(+))">
    <location>
        <begin position="1"/>
        <end position="272"/>
    </location>
</feature>
<feature type="active site" description="Proton acceptor" evidence="1">
    <location>
        <position position="65"/>
    </location>
</feature>
<feature type="binding site" evidence="1">
    <location>
        <begin position="14"/>
        <end position="16"/>
    </location>
    <ligand>
        <name>shikimate</name>
        <dbReference type="ChEBI" id="CHEBI:36208"/>
    </ligand>
</feature>
<feature type="binding site" evidence="1">
    <location>
        <position position="61"/>
    </location>
    <ligand>
        <name>shikimate</name>
        <dbReference type="ChEBI" id="CHEBI:36208"/>
    </ligand>
</feature>
<feature type="binding site" evidence="1">
    <location>
        <position position="77"/>
    </location>
    <ligand>
        <name>NADP(+)</name>
        <dbReference type="ChEBI" id="CHEBI:58349"/>
    </ligand>
</feature>
<feature type="binding site" evidence="1">
    <location>
        <position position="86"/>
    </location>
    <ligand>
        <name>shikimate</name>
        <dbReference type="ChEBI" id="CHEBI:36208"/>
    </ligand>
</feature>
<feature type="binding site" evidence="1">
    <location>
        <position position="102"/>
    </location>
    <ligand>
        <name>shikimate</name>
        <dbReference type="ChEBI" id="CHEBI:36208"/>
    </ligand>
</feature>
<feature type="binding site" evidence="1">
    <location>
        <begin position="126"/>
        <end position="130"/>
    </location>
    <ligand>
        <name>NADP(+)</name>
        <dbReference type="ChEBI" id="CHEBI:58349"/>
    </ligand>
</feature>
<feature type="binding site" evidence="1">
    <location>
        <begin position="149"/>
        <end position="154"/>
    </location>
    <ligand>
        <name>NADP(+)</name>
        <dbReference type="ChEBI" id="CHEBI:58349"/>
    </ligand>
</feature>
<feature type="binding site" evidence="1">
    <location>
        <position position="213"/>
    </location>
    <ligand>
        <name>NADP(+)</name>
        <dbReference type="ChEBI" id="CHEBI:58349"/>
    </ligand>
</feature>
<feature type="binding site" evidence="1">
    <location>
        <position position="215"/>
    </location>
    <ligand>
        <name>shikimate</name>
        <dbReference type="ChEBI" id="CHEBI:36208"/>
    </ligand>
</feature>
<feature type="binding site" evidence="1">
    <location>
        <position position="237"/>
    </location>
    <ligand>
        <name>NADP(+)</name>
        <dbReference type="ChEBI" id="CHEBI:58349"/>
    </ligand>
</feature>
<protein>
    <recommendedName>
        <fullName evidence="1">Shikimate dehydrogenase (NADP(+))</fullName>
        <shortName evidence="1">SDH</shortName>
        <ecNumber evidence="1">1.1.1.25</ecNumber>
    </recommendedName>
</protein>
<proteinExistence type="inferred from homology"/>
<sequence>MPSFVVIGNPIGHSKSPRIHQLFAEQTGIAHPYESLCAPLAGFEQTARSFFAKDGGGANVTLPFKQQACKLADELTERAALSGAVNTLKKLDDGRLVGDNTDGIGLLSDLERLDLIKPDDRILLIGAGGAARGVILPLLSFGCRLTVTNRTQEKAEDLAQLFKHSGHIDSMVKEQLAAGRFDLVINATSSGVGGGIPDIPEGLIGDHTRCYDMFYQAGDTPFLHWCRQQGAFQMADGLGMLVGQAAHSFMLWHGIMPQITPAIAVLKAEMGA</sequence>
<dbReference type="EC" id="1.1.1.25" evidence="1"/>
<dbReference type="EMBL" id="CU468135">
    <property type="protein sequence ID" value="CAO98169.1"/>
    <property type="molecule type" value="Genomic_DNA"/>
</dbReference>
<dbReference type="RefSeq" id="WP_012442819.1">
    <property type="nucleotide sequence ID" value="NC_010694.1"/>
</dbReference>
<dbReference type="SMR" id="B2VK88"/>
<dbReference type="STRING" id="465817.ETA_31230"/>
<dbReference type="KEGG" id="eta:ETA_31230"/>
<dbReference type="eggNOG" id="COG0169">
    <property type="taxonomic scope" value="Bacteria"/>
</dbReference>
<dbReference type="HOGENOM" id="CLU_044063_2_1_6"/>
<dbReference type="OrthoDB" id="9776868at2"/>
<dbReference type="UniPathway" id="UPA00053">
    <property type="reaction ID" value="UER00087"/>
</dbReference>
<dbReference type="Proteomes" id="UP000001726">
    <property type="component" value="Chromosome"/>
</dbReference>
<dbReference type="GO" id="GO:0005829">
    <property type="term" value="C:cytosol"/>
    <property type="evidence" value="ECO:0007669"/>
    <property type="project" value="TreeGrafter"/>
</dbReference>
<dbReference type="GO" id="GO:0050661">
    <property type="term" value="F:NADP binding"/>
    <property type="evidence" value="ECO:0007669"/>
    <property type="project" value="InterPro"/>
</dbReference>
<dbReference type="GO" id="GO:0004764">
    <property type="term" value="F:shikimate 3-dehydrogenase (NADP+) activity"/>
    <property type="evidence" value="ECO:0007669"/>
    <property type="project" value="UniProtKB-UniRule"/>
</dbReference>
<dbReference type="GO" id="GO:0008652">
    <property type="term" value="P:amino acid biosynthetic process"/>
    <property type="evidence" value="ECO:0007669"/>
    <property type="project" value="UniProtKB-KW"/>
</dbReference>
<dbReference type="GO" id="GO:0009073">
    <property type="term" value="P:aromatic amino acid family biosynthetic process"/>
    <property type="evidence" value="ECO:0007669"/>
    <property type="project" value="UniProtKB-KW"/>
</dbReference>
<dbReference type="GO" id="GO:0009423">
    <property type="term" value="P:chorismate biosynthetic process"/>
    <property type="evidence" value="ECO:0007669"/>
    <property type="project" value="UniProtKB-UniRule"/>
</dbReference>
<dbReference type="GO" id="GO:0019632">
    <property type="term" value="P:shikimate metabolic process"/>
    <property type="evidence" value="ECO:0007669"/>
    <property type="project" value="InterPro"/>
</dbReference>
<dbReference type="CDD" id="cd01065">
    <property type="entry name" value="NAD_bind_Shikimate_DH"/>
    <property type="match status" value="1"/>
</dbReference>
<dbReference type="FunFam" id="3.40.50.10860:FF:000006">
    <property type="entry name" value="Shikimate dehydrogenase (NADP(+))"/>
    <property type="match status" value="1"/>
</dbReference>
<dbReference type="FunFam" id="3.40.50.720:FF:000104">
    <property type="entry name" value="Shikimate dehydrogenase (NADP(+))"/>
    <property type="match status" value="1"/>
</dbReference>
<dbReference type="Gene3D" id="3.40.50.10860">
    <property type="entry name" value="Leucine Dehydrogenase, chain A, domain 1"/>
    <property type="match status" value="1"/>
</dbReference>
<dbReference type="Gene3D" id="3.40.50.720">
    <property type="entry name" value="NAD(P)-binding Rossmann-like Domain"/>
    <property type="match status" value="1"/>
</dbReference>
<dbReference type="HAMAP" id="MF_00222">
    <property type="entry name" value="Shikimate_DH_AroE"/>
    <property type="match status" value="1"/>
</dbReference>
<dbReference type="InterPro" id="IPR046346">
    <property type="entry name" value="Aminoacid_DH-like_N_sf"/>
</dbReference>
<dbReference type="InterPro" id="IPR036291">
    <property type="entry name" value="NAD(P)-bd_dom_sf"/>
</dbReference>
<dbReference type="InterPro" id="IPR041121">
    <property type="entry name" value="SDH_C"/>
</dbReference>
<dbReference type="InterPro" id="IPR011342">
    <property type="entry name" value="Shikimate_DH"/>
</dbReference>
<dbReference type="InterPro" id="IPR013708">
    <property type="entry name" value="Shikimate_DH-bd_N"/>
</dbReference>
<dbReference type="InterPro" id="IPR022893">
    <property type="entry name" value="Shikimate_DH_fam"/>
</dbReference>
<dbReference type="InterPro" id="IPR006151">
    <property type="entry name" value="Shikm_DH/Glu-tRNA_Rdtase"/>
</dbReference>
<dbReference type="NCBIfam" id="TIGR00507">
    <property type="entry name" value="aroE"/>
    <property type="match status" value="1"/>
</dbReference>
<dbReference type="NCBIfam" id="NF001310">
    <property type="entry name" value="PRK00258.1-2"/>
    <property type="match status" value="1"/>
</dbReference>
<dbReference type="PANTHER" id="PTHR21089:SF1">
    <property type="entry name" value="BIFUNCTIONAL 3-DEHYDROQUINATE DEHYDRATASE_SHIKIMATE DEHYDROGENASE, CHLOROPLASTIC"/>
    <property type="match status" value="1"/>
</dbReference>
<dbReference type="PANTHER" id="PTHR21089">
    <property type="entry name" value="SHIKIMATE DEHYDROGENASE"/>
    <property type="match status" value="1"/>
</dbReference>
<dbReference type="Pfam" id="PF18317">
    <property type="entry name" value="SDH_C"/>
    <property type="match status" value="1"/>
</dbReference>
<dbReference type="Pfam" id="PF01488">
    <property type="entry name" value="Shikimate_DH"/>
    <property type="match status" value="1"/>
</dbReference>
<dbReference type="Pfam" id="PF08501">
    <property type="entry name" value="Shikimate_dh_N"/>
    <property type="match status" value="1"/>
</dbReference>
<dbReference type="SUPFAM" id="SSF53223">
    <property type="entry name" value="Aminoacid dehydrogenase-like, N-terminal domain"/>
    <property type="match status" value="1"/>
</dbReference>
<dbReference type="SUPFAM" id="SSF51735">
    <property type="entry name" value="NAD(P)-binding Rossmann-fold domains"/>
    <property type="match status" value="1"/>
</dbReference>